<gene>
    <name evidence="1" type="primary">htpX</name>
    <name type="ordered locus">AB57_3073</name>
</gene>
<feature type="chain" id="PRO_1000192734" description="Protease HtpX">
    <location>
        <begin position="1"/>
        <end position="301"/>
    </location>
</feature>
<feature type="transmembrane region" description="Helical" evidence="1">
    <location>
        <begin position="4"/>
        <end position="24"/>
    </location>
</feature>
<feature type="transmembrane region" description="Helical" evidence="1">
    <location>
        <begin position="38"/>
        <end position="58"/>
    </location>
</feature>
<feature type="transmembrane region" description="Helical" evidence="1">
    <location>
        <begin position="155"/>
        <end position="175"/>
    </location>
</feature>
<feature type="transmembrane region" description="Helical" evidence="1">
    <location>
        <begin position="200"/>
        <end position="220"/>
    </location>
</feature>
<feature type="active site" evidence="1">
    <location>
        <position position="148"/>
    </location>
</feature>
<feature type="binding site" evidence="1">
    <location>
        <position position="147"/>
    </location>
    <ligand>
        <name>Zn(2+)</name>
        <dbReference type="ChEBI" id="CHEBI:29105"/>
        <note>catalytic</note>
    </ligand>
</feature>
<feature type="binding site" evidence="1">
    <location>
        <position position="151"/>
    </location>
    <ligand>
        <name>Zn(2+)</name>
        <dbReference type="ChEBI" id="CHEBI:29105"/>
        <note>catalytic</note>
    </ligand>
</feature>
<feature type="binding site" evidence="1">
    <location>
        <position position="226"/>
    </location>
    <ligand>
        <name>Zn(2+)</name>
        <dbReference type="ChEBI" id="CHEBI:29105"/>
        <note>catalytic</note>
    </ligand>
</feature>
<comment type="cofactor">
    <cofactor evidence="1">
        <name>Zn(2+)</name>
        <dbReference type="ChEBI" id="CHEBI:29105"/>
    </cofactor>
    <text evidence="1">Binds 1 zinc ion per subunit.</text>
</comment>
<comment type="subcellular location">
    <subcellularLocation>
        <location evidence="1">Cell inner membrane</location>
        <topology evidence="1">Multi-pass membrane protein</topology>
    </subcellularLocation>
</comment>
<comment type="similarity">
    <text evidence="1">Belongs to the peptidase M48B family.</text>
</comment>
<dbReference type="EC" id="3.4.24.-" evidence="1"/>
<dbReference type="EMBL" id="CP001182">
    <property type="protein sequence ID" value="ACJ42405.1"/>
    <property type="molecule type" value="Genomic_DNA"/>
</dbReference>
<dbReference type="RefSeq" id="WP_000984535.1">
    <property type="nucleotide sequence ID" value="NC_011586.2"/>
</dbReference>
<dbReference type="SMR" id="B7I612"/>
<dbReference type="MEROPS" id="M48.002"/>
<dbReference type="GeneID" id="92894933"/>
<dbReference type="KEGG" id="abn:AB57_3073"/>
<dbReference type="HOGENOM" id="CLU_042266_1_0_6"/>
<dbReference type="Proteomes" id="UP000007094">
    <property type="component" value="Chromosome"/>
</dbReference>
<dbReference type="GO" id="GO:0005886">
    <property type="term" value="C:plasma membrane"/>
    <property type="evidence" value="ECO:0007669"/>
    <property type="project" value="UniProtKB-SubCell"/>
</dbReference>
<dbReference type="GO" id="GO:0004222">
    <property type="term" value="F:metalloendopeptidase activity"/>
    <property type="evidence" value="ECO:0007669"/>
    <property type="project" value="UniProtKB-UniRule"/>
</dbReference>
<dbReference type="GO" id="GO:0008270">
    <property type="term" value="F:zinc ion binding"/>
    <property type="evidence" value="ECO:0007669"/>
    <property type="project" value="UniProtKB-UniRule"/>
</dbReference>
<dbReference type="GO" id="GO:0006508">
    <property type="term" value="P:proteolysis"/>
    <property type="evidence" value="ECO:0007669"/>
    <property type="project" value="UniProtKB-KW"/>
</dbReference>
<dbReference type="CDD" id="cd07335">
    <property type="entry name" value="M48B_HtpX_like"/>
    <property type="match status" value="1"/>
</dbReference>
<dbReference type="Gene3D" id="3.30.2010.10">
    <property type="entry name" value="Metalloproteases ('zincins'), catalytic domain"/>
    <property type="match status" value="1"/>
</dbReference>
<dbReference type="HAMAP" id="MF_00188">
    <property type="entry name" value="Pept_M48_protease_HtpX"/>
    <property type="match status" value="1"/>
</dbReference>
<dbReference type="InterPro" id="IPR050083">
    <property type="entry name" value="HtpX_protease"/>
</dbReference>
<dbReference type="InterPro" id="IPR022919">
    <property type="entry name" value="Pept_M48_protease_HtpX"/>
</dbReference>
<dbReference type="InterPro" id="IPR001915">
    <property type="entry name" value="Peptidase_M48"/>
</dbReference>
<dbReference type="NCBIfam" id="NF003965">
    <property type="entry name" value="PRK05457.1"/>
    <property type="match status" value="1"/>
</dbReference>
<dbReference type="PANTHER" id="PTHR43221">
    <property type="entry name" value="PROTEASE HTPX"/>
    <property type="match status" value="1"/>
</dbReference>
<dbReference type="PANTHER" id="PTHR43221:SF1">
    <property type="entry name" value="PROTEASE HTPX"/>
    <property type="match status" value="1"/>
</dbReference>
<dbReference type="Pfam" id="PF01435">
    <property type="entry name" value="Peptidase_M48"/>
    <property type="match status" value="1"/>
</dbReference>
<proteinExistence type="inferred from homology"/>
<accession>B7I612</accession>
<name>HTPX_ACIB5</name>
<protein>
    <recommendedName>
        <fullName evidence="1">Protease HtpX</fullName>
        <ecNumber evidence="1">3.4.24.-</ecNumber>
    </recommendedName>
    <alternativeName>
        <fullName evidence="1">Heat shock protein HtpX</fullName>
    </alternativeName>
</protein>
<organism>
    <name type="scientific">Acinetobacter baumannii (strain AB0057)</name>
    <dbReference type="NCBI Taxonomy" id="480119"/>
    <lineage>
        <taxon>Bacteria</taxon>
        <taxon>Pseudomonadati</taxon>
        <taxon>Pseudomonadota</taxon>
        <taxon>Gammaproteobacteria</taxon>
        <taxon>Moraxellales</taxon>
        <taxon>Moraxellaceae</taxon>
        <taxon>Acinetobacter</taxon>
        <taxon>Acinetobacter calcoaceticus/baumannii complex</taxon>
    </lineage>
</organism>
<keyword id="KW-0997">Cell inner membrane</keyword>
<keyword id="KW-1003">Cell membrane</keyword>
<keyword id="KW-0378">Hydrolase</keyword>
<keyword id="KW-0472">Membrane</keyword>
<keyword id="KW-0479">Metal-binding</keyword>
<keyword id="KW-0482">Metalloprotease</keyword>
<keyword id="KW-0645">Protease</keyword>
<keyword id="KW-0346">Stress response</keyword>
<keyword id="KW-0812">Transmembrane</keyword>
<keyword id="KW-1133">Transmembrane helix</keyword>
<keyword id="KW-0862">Zinc</keyword>
<evidence type="ECO:0000255" key="1">
    <source>
        <dbReference type="HAMAP-Rule" id="MF_00188"/>
    </source>
</evidence>
<reference key="1">
    <citation type="journal article" date="2008" name="J. Bacteriol.">
        <title>Comparative genome sequence analysis of multidrug-resistant Acinetobacter baumannii.</title>
        <authorList>
            <person name="Adams M.D."/>
            <person name="Goglin K."/>
            <person name="Molyneaux N."/>
            <person name="Hujer K.M."/>
            <person name="Lavender H."/>
            <person name="Jamison J.J."/>
            <person name="MacDonald I.J."/>
            <person name="Martin K.M."/>
            <person name="Russo T."/>
            <person name="Campagnari A.A."/>
            <person name="Hujer A.M."/>
            <person name="Bonomo R.A."/>
            <person name="Gill S.R."/>
        </authorList>
    </citation>
    <scope>NUCLEOTIDE SEQUENCE [LARGE SCALE GENOMIC DNA]</scope>
    <source>
        <strain>AB0057</strain>
    </source>
</reference>
<sequence>MMRIGLFLLTNLAVLVVAGIILSLFGVGSYHGAGGLNLGNLLVICFVFGMVGSLVSLFMSKWMAKKTTGTELIDPNAPRNQAESWLLQTVAELSQRAGINMPEVGIFPSYQSNAFATGWNKNDALVAVSSGLLERMNKDELRAVLAHEIGHVANGDMVTLALIQGVVNAFVMFFARVVGDFIDRNVFGRQDNEAPGMGYFIITMVLDIVFGILASAIVMWFSRYREYRADEAGARLAGKQAMISALLRLQAETELPDQMPKEMKAFAIAEGKEQGFSLAALFQTHPTIEQRVAALHQLDCP</sequence>